<evidence type="ECO:0000305" key="1"/>
<reference key="1">
    <citation type="submission" date="2004-09" db="EMBL/GenBank/DDBJ databases">
        <authorList>
            <consortium name="NIH - Zebrafish Gene Collection (ZGC) project"/>
        </authorList>
    </citation>
    <scope>NUCLEOTIDE SEQUENCE [LARGE SCALE MRNA]</scope>
    <source>
        <tissue>Larva</tissue>
    </source>
</reference>
<keyword id="KW-1185">Reference proteome</keyword>
<organism>
    <name type="scientific">Danio rerio</name>
    <name type="common">Zebrafish</name>
    <name type="synonym">Brachydanio rerio</name>
    <dbReference type="NCBI Taxonomy" id="7955"/>
    <lineage>
        <taxon>Eukaryota</taxon>
        <taxon>Metazoa</taxon>
        <taxon>Chordata</taxon>
        <taxon>Craniata</taxon>
        <taxon>Vertebrata</taxon>
        <taxon>Euteleostomi</taxon>
        <taxon>Actinopterygii</taxon>
        <taxon>Neopterygii</taxon>
        <taxon>Teleostei</taxon>
        <taxon>Ostariophysi</taxon>
        <taxon>Cypriniformes</taxon>
        <taxon>Danionidae</taxon>
        <taxon>Danioninae</taxon>
        <taxon>Danio</taxon>
    </lineage>
</organism>
<comment type="similarity">
    <text evidence="1">Belongs to the cornifelin family.</text>
</comment>
<name>CNFN_DANRE</name>
<proteinExistence type="inferred from homology"/>
<accession>Q66I68</accession>
<sequence>MPYQAESMTSQPQMTVTSYTVSHWSSDVCDCCDDCGIRLCGAFIPCILGCKVAQDNGDSCCLPFLPGAMVALRTSIRDRYHINGSVCDDWVIMTCCSFCGLCQLAREQKARG</sequence>
<protein>
    <recommendedName>
        <fullName>Cornifelin homolog</fullName>
    </recommendedName>
</protein>
<gene>
    <name type="primary">cnfn</name>
    <name type="ORF">zgc:103671</name>
</gene>
<dbReference type="EMBL" id="BC081506">
    <property type="protein sequence ID" value="AAH81506.1"/>
    <property type="molecule type" value="mRNA"/>
</dbReference>
<dbReference type="RefSeq" id="NP_001004663.1">
    <property type="nucleotide sequence ID" value="NM_001004663.1"/>
</dbReference>
<dbReference type="FunCoup" id="Q66I68">
    <property type="interactions" value="15"/>
</dbReference>
<dbReference type="PaxDb" id="7955-ENSDARP00000116800"/>
<dbReference type="GeneID" id="447925"/>
<dbReference type="KEGG" id="dre:447925"/>
<dbReference type="AGR" id="ZFIN:ZDB-GENE-040912-110"/>
<dbReference type="CTD" id="84518"/>
<dbReference type="ZFIN" id="ZDB-GENE-040912-110">
    <property type="gene designation" value="cnfn"/>
</dbReference>
<dbReference type="eggNOG" id="ENOG502S8N3">
    <property type="taxonomic scope" value="Eukaryota"/>
</dbReference>
<dbReference type="InParanoid" id="Q66I68"/>
<dbReference type="OrthoDB" id="1045822at2759"/>
<dbReference type="PhylomeDB" id="Q66I68"/>
<dbReference type="PRO" id="PR:Q66I68"/>
<dbReference type="Proteomes" id="UP000000437">
    <property type="component" value="Alternate scaffold 16"/>
</dbReference>
<dbReference type="Proteomes" id="UP000000437">
    <property type="component" value="Chromosome 16"/>
</dbReference>
<dbReference type="GO" id="GO:0001533">
    <property type="term" value="C:cornified envelope"/>
    <property type="evidence" value="ECO:0000318"/>
    <property type="project" value="GO_Central"/>
</dbReference>
<dbReference type="InterPro" id="IPR006461">
    <property type="entry name" value="PLAC_motif_containing"/>
</dbReference>
<dbReference type="NCBIfam" id="TIGR01571">
    <property type="entry name" value="A_thal_Cys_rich"/>
    <property type="match status" value="1"/>
</dbReference>
<dbReference type="PANTHER" id="PTHR15907">
    <property type="entry name" value="DUF614 FAMILY PROTEIN-RELATED"/>
    <property type="match status" value="1"/>
</dbReference>
<dbReference type="Pfam" id="PF04749">
    <property type="entry name" value="PLAC8"/>
    <property type="match status" value="1"/>
</dbReference>
<feature type="chain" id="PRO_0000261197" description="Cornifelin homolog">
    <location>
        <begin position="1"/>
        <end position="112"/>
    </location>
</feature>